<evidence type="ECO:0000255" key="1"/>
<evidence type="ECO:0000256" key="2">
    <source>
        <dbReference type="SAM" id="MobiDB-lite"/>
    </source>
</evidence>
<evidence type="ECO:0000305" key="3"/>
<feature type="chain" id="PRO_0000205523" description="RNA polymerase sigma-54 factor">
    <location>
        <begin position="1"/>
        <end position="502"/>
    </location>
</feature>
<feature type="DNA-binding region" description="H-T-H motif" evidence="1">
    <location>
        <begin position="391"/>
        <end position="410"/>
    </location>
</feature>
<feature type="region of interest" description="Disordered" evidence="2">
    <location>
        <begin position="40"/>
        <end position="104"/>
    </location>
</feature>
<feature type="short sequence motif" description="RPON box">
    <location>
        <begin position="479"/>
        <end position="487"/>
    </location>
</feature>
<feature type="compositionally biased region" description="Polar residues" evidence="2">
    <location>
        <begin position="68"/>
        <end position="77"/>
    </location>
</feature>
<protein>
    <recommendedName>
        <fullName>RNA polymerase sigma-54 factor</fullName>
    </recommendedName>
</protein>
<gene>
    <name type="primary">rpoN</name>
    <name type="synonym">ntrA</name>
</gene>
<accession>P08623</accession>
<keyword id="KW-0238">DNA-binding</keyword>
<keyword id="KW-0240">DNA-directed RNA polymerase</keyword>
<keyword id="KW-0535">Nitrogen fixation</keyword>
<keyword id="KW-0548">Nucleotidyltransferase</keyword>
<keyword id="KW-0731">Sigma factor</keyword>
<keyword id="KW-0804">Transcription</keyword>
<keyword id="KW-0805">Transcription regulation</keyword>
<keyword id="KW-0808">Transferase</keyword>
<proteinExistence type="inferred from homology"/>
<dbReference type="EMBL" id="X05888">
    <property type="protein sequence ID" value="CAA29314.1"/>
    <property type="molecule type" value="Genomic_DNA"/>
</dbReference>
<dbReference type="PIR" id="S00720">
    <property type="entry name" value="S00720"/>
</dbReference>
<dbReference type="RefSeq" id="WP_041806998.1">
    <property type="nucleotide sequence ID" value="NZ_FPKM01000010.1"/>
</dbReference>
<dbReference type="SMR" id="P08623"/>
<dbReference type="GO" id="GO:0000428">
    <property type="term" value="C:DNA-directed RNA polymerase complex"/>
    <property type="evidence" value="ECO:0007669"/>
    <property type="project" value="UniProtKB-KW"/>
</dbReference>
<dbReference type="GO" id="GO:0003677">
    <property type="term" value="F:DNA binding"/>
    <property type="evidence" value="ECO:0007669"/>
    <property type="project" value="UniProtKB-KW"/>
</dbReference>
<dbReference type="GO" id="GO:0001216">
    <property type="term" value="F:DNA-binding transcription activator activity"/>
    <property type="evidence" value="ECO:0007669"/>
    <property type="project" value="InterPro"/>
</dbReference>
<dbReference type="GO" id="GO:0016779">
    <property type="term" value="F:nucleotidyltransferase activity"/>
    <property type="evidence" value="ECO:0007669"/>
    <property type="project" value="UniProtKB-KW"/>
</dbReference>
<dbReference type="GO" id="GO:0016987">
    <property type="term" value="F:sigma factor activity"/>
    <property type="evidence" value="ECO:0007669"/>
    <property type="project" value="UniProtKB-KW"/>
</dbReference>
<dbReference type="GO" id="GO:0006352">
    <property type="term" value="P:DNA-templated transcription initiation"/>
    <property type="evidence" value="ECO:0007669"/>
    <property type="project" value="InterPro"/>
</dbReference>
<dbReference type="GO" id="GO:0009399">
    <property type="term" value="P:nitrogen fixation"/>
    <property type="evidence" value="ECO:0007669"/>
    <property type="project" value="UniProtKB-KW"/>
</dbReference>
<dbReference type="FunFam" id="1.10.10.1330:FF:000001">
    <property type="entry name" value="RNA polymerase sigma-54 factor"/>
    <property type="match status" value="1"/>
</dbReference>
<dbReference type="FunFam" id="1.10.10.60:FF:000045">
    <property type="entry name" value="RNA polymerase sigma-54 factor"/>
    <property type="match status" value="1"/>
</dbReference>
<dbReference type="Gene3D" id="1.10.10.60">
    <property type="entry name" value="Homeodomain-like"/>
    <property type="match status" value="1"/>
</dbReference>
<dbReference type="Gene3D" id="1.10.10.1330">
    <property type="entry name" value="RNA polymerase sigma-54 factor, core-binding domain"/>
    <property type="match status" value="1"/>
</dbReference>
<dbReference type="InterPro" id="IPR000394">
    <property type="entry name" value="RNA_pol_sigma_54"/>
</dbReference>
<dbReference type="InterPro" id="IPR007046">
    <property type="entry name" value="RNA_pol_sigma_54_core-bd"/>
</dbReference>
<dbReference type="InterPro" id="IPR007634">
    <property type="entry name" value="RNA_pol_sigma_54_DNA-bd"/>
</dbReference>
<dbReference type="InterPro" id="IPR038709">
    <property type="entry name" value="RpoN_core-bd_sf"/>
</dbReference>
<dbReference type="NCBIfam" id="NF004595">
    <property type="entry name" value="PRK05932.1-2"/>
    <property type="match status" value="1"/>
</dbReference>
<dbReference type="NCBIfam" id="NF009118">
    <property type="entry name" value="PRK12469.1"/>
    <property type="match status" value="1"/>
</dbReference>
<dbReference type="NCBIfam" id="TIGR02395">
    <property type="entry name" value="rpoN_sigma"/>
    <property type="match status" value="1"/>
</dbReference>
<dbReference type="PANTHER" id="PTHR32248">
    <property type="entry name" value="RNA POLYMERASE SIGMA-54 FACTOR"/>
    <property type="match status" value="1"/>
</dbReference>
<dbReference type="PANTHER" id="PTHR32248:SF4">
    <property type="entry name" value="RNA POLYMERASE SIGMA-54 FACTOR"/>
    <property type="match status" value="1"/>
</dbReference>
<dbReference type="Pfam" id="PF00309">
    <property type="entry name" value="Sigma54_AID"/>
    <property type="match status" value="1"/>
</dbReference>
<dbReference type="Pfam" id="PF04963">
    <property type="entry name" value="Sigma54_CBD"/>
    <property type="match status" value="1"/>
</dbReference>
<dbReference type="Pfam" id="PF04552">
    <property type="entry name" value="Sigma54_DBD"/>
    <property type="match status" value="1"/>
</dbReference>
<dbReference type="PIRSF" id="PIRSF000774">
    <property type="entry name" value="RpoN"/>
    <property type="match status" value="1"/>
</dbReference>
<dbReference type="PRINTS" id="PR00045">
    <property type="entry name" value="SIGMA54FCT"/>
</dbReference>
<dbReference type="PROSITE" id="PS00717">
    <property type="entry name" value="SIGMA54_1"/>
    <property type="match status" value="1"/>
</dbReference>
<dbReference type="PROSITE" id="PS00718">
    <property type="entry name" value="SIGMA54_2"/>
    <property type="match status" value="1"/>
</dbReference>
<dbReference type="PROSITE" id="PS50044">
    <property type="entry name" value="SIGMA54_3"/>
    <property type="match status" value="1"/>
</dbReference>
<name>RP54_AZOVI</name>
<sequence length="502" mass="56917">MKPSLVLKMGQQLTMTPQLQQAIRLLQLSTLDLQQEIQEALDSNPMLERQEDAEDYDSPDMLGEHGDQSTLDTTPGSYQEGYESGAASEDGGTLEEGDWHERIPSELPVDTAWEDIYQTSASNLPSTDEDEWDFTTRTSTGESLQSHLLWQLNLTPMSDTDRLIAVTLIDSINSDGYLEAALEEILASLDPELGVELDEVEMVLRRIQQFEPAGIAARDLSESLLLQLRQLPPDTPWLEEAKRLAKDYLDLLGNRDFTQLMRRMKLKEEELRPVIELIQSLNPRPGAQIESSEPEYVVPDVIVRKHNDRWLVELNQEAVPRLRINPHYAGFIRRADASADNTFMRNQLQEARWFIKSLQSRNETLMKVSTQIVEHQRGFLDYGEEAMKPLVLHDIAEAVGMHESTISRVTTQKYMHTPRGIYELKYFFSSHVSTAEGGECSSTAIRAIIKKLIAAENPKKPLSDSKIAGLLEEQGIQVARRTVAKYRESLSIAPSSERKRLM</sequence>
<comment type="function">
    <text>Sigma factors are initiation factors that promote the attachment of RNA polymerase to specific initiation sites and are then released. This sigma factor is responsible for the expression of the nitrogen fixation genes. The open complex (sigma-54 and core RNA polymerase) serves as the receptor for receipt of the melting signal from the remotely bound activator protein NifA for the expression of the nitrogen fixation proteins.</text>
</comment>
<comment type="similarity">
    <text evidence="3">Belongs to the sigma-54 factor family.</text>
</comment>
<organism>
    <name type="scientific">Azotobacter vinelandii</name>
    <dbReference type="NCBI Taxonomy" id="354"/>
    <lineage>
        <taxon>Bacteria</taxon>
        <taxon>Pseudomonadati</taxon>
        <taxon>Pseudomonadota</taxon>
        <taxon>Gammaproteobacteria</taxon>
        <taxon>Pseudomonadales</taxon>
        <taxon>Pseudomonadaceae</taxon>
        <taxon>Azotobacter</taxon>
    </lineage>
</organism>
<reference key="1">
    <citation type="journal article" date="1987" name="Mol. Gen. Genet.">
        <title>The nucleotide sequence of the sigma factor gene ntrA (rpoN) of Azotobacter vinelandii: analysis of conserved sequences in NtrA proteins.</title>
        <authorList>
            <person name="Merrick M.J."/>
            <person name="Gibbins J."/>
            <person name="Toukdarian A."/>
        </authorList>
    </citation>
    <scope>NUCLEOTIDE SEQUENCE [GENOMIC DNA]</scope>
    <source>
        <strain>ATCC 13705 / OP1 / DSM 366 / NCIMB 11614 / LMG 3878 / UW</strain>
    </source>
</reference>